<organism>
    <name type="scientific">Ruminiclostridium cellulolyticum (strain ATCC 35319 / DSM 5812 / JCM 6584 / H10)</name>
    <name type="common">Clostridium cellulolyticum</name>
    <dbReference type="NCBI Taxonomy" id="394503"/>
    <lineage>
        <taxon>Bacteria</taxon>
        <taxon>Bacillati</taxon>
        <taxon>Bacillota</taxon>
        <taxon>Clostridia</taxon>
        <taxon>Eubacteriales</taxon>
        <taxon>Oscillospiraceae</taxon>
        <taxon>Ruminiclostridium</taxon>
    </lineage>
</organism>
<keyword id="KW-1005">Bacterial flagellum biogenesis</keyword>
<keyword id="KW-0143">Chaperone</keyword>
<keyword id="KW-0963">Cytoplasm</keyword>
<keyword id="KW-1185">Reference proteome</keyword>
<keyword id="KW-0810">Translation regulation</keyword>
<comment type="function">
    <text evidence="1">Acts as an anti-CsrA protein, binds CsrA and prevents it from repressing translation of its target genes, one of which is flagellin. Binds to flagellin and participates in the assembly of the flagellum.</text>
</comment>
<comment type="subunit">
    <text evidence="1">Interacts with translational regulator CsrA and flagellin(s).</text>
</comment>
<comment type="subcellular location">
    <subcellularLocation>
        <location evidence="1">Cytoplasm</location>
    </subcellularLocation>
</comment>
<comment type="similarity">
    <text evidence="1">Belongs to the FliW family.</text>
</comment>
<feature type="chain" id="PRO_1000164465" description="Flagellar assembly factor FliW">
    <location>
        <begin position="1"/>
        <end position="148"/>
    </location>
</feature>
<dbReference type="EMBL" id="CP001348">
    <property type="protein sequence ID" value="ACL74486.1"/>
    <property type="molecule type" value="Genomic_DNA"/>
</dbReference>
<dbReference type="RefSeq" id="WP_012634552.1">
    <property type="nucleotide sequence ID" value="NC_011898.1"/>
</dbReference>
<dbReference type="SMR" id="B8I4D2"/>
<dbReference type="STRING" id="394503.Ccel_0098"/>
<dbReference type="KEGG" id="cce:Ccel_0098"/>
<dbReference type="eggNOG" id="COG1699">
    <property type="taxonomic scope" value="Bacteria"/>
</dbReference>
<dbReference type="HOGENOM" id="CLU_112356_0_2_9"/>
<dbReference type="OrthoDB" id="9801235at2"/>
<dbReference type="Proteomes" id="UP000001349">
    <property type="component" value="Chromosome"/>
</dbReference>
<dbReference type="GO" id="GO:0005737">
    <property type="term" value="C:cytoplasm"/>
    <property type="evidence" value="ECO:0007669"/>
    <property type="project" value="UniProtKB-SubCell"/>
</dbReference>
<dbReference type="GO" id="GO:0044780">
    <property type="term" value="P:bacterial-type flagellum assembly"/>
    <property type="evidence" value="ECO:0007669"/>
    <property type="project" value="UniProtKB-UniRule"/>
</dbReference>
<dbReference type="GO" id="GO:0006417">
    <property type="term" value="P:regulation of translation"/>
    <property type="evidence" value="ECO:0007669"/>
    <property type="project" value="UniProtKB-KW"/>
</dbReference>
<dbReference type="Gene3D" id="2.30.290.10">
    <property type="entry name" value="BH3618-like"/>
    <property type="match status" value="1"/>
</dbReference>
<dbReference type="HAMAP" id="MF_01185">
    <property type="entry name" value="FliW"/>
    <property type="match status" value="1"/>
</dbReference>
<dbReference type="InterPro" id="IPR003775">
    <property type="entry name" value="Flagellar_assembly_factor_FliW"/>
</dbReference>
<dbReference type="InterPro" id="IPR024046">
    <property type="entry name" value="Flagellar_assmbl_FliW_dom_sf"/>
</dbReference>
<dbReference type="NCBIfam" id="NF009793">
    <property type="entry name" value="PRK13285.1-1"/>
    <property type="match status" value="1"/>
</dbReference>
<dbReference type="NCBIfam" id="NF009798">
    <property type="entry name" value="PRK13285.2-1"/>
    <property type="match status" value="1"/>
</dbReference>
<dbReference type="PANTHER" id="PTHR39190">
    <property type="entry name" value="FLAGELLAR ASSEMBLY FACTOR FLIW"/>
    <property type="match status" value="1"/>
</dbReference>
<dbReference type="PANTHER" id="PTHR39190:SF1">
    <property type="entry name" value="FLAGELLAR ASSEMBLY FACTOR FLIW"/>
    <property type="match status" value="1"/>
</dbReference>
<dbReference type="Pfam" id="PF02623">
    <property type="entry name" value="FliW"/>
    <property type="match status" value="1"/>
</dbReference>
<dbReference type="SUPFAM" id="SSF141457">
    <property type="entry name" value="BH3618-like"/>
    <property type="match status" value="1"/>
</dbReference>
<proteinExistence type="inferred from homology"/>
<gene>
    <name evidence="1" type="primary">fliW</name>
    <name type="ordered locus">Ccel_0098</name>
</gene>
<evidence type="ECO:0000255" key="1">
    <source>
        <dbReference type="HAMAP-Rule" id="MF_01185"/>
    </source>
</evidence>
<sequence length="148" mass="16981">MLVKTTHFGEINIKDEDIIEFSEGIVGFEDIHRYGIIRNQNSDSPFSWLQAVEKSELAFAVVDPFVIKKDYDFVLSDEYVKALDINDPSQVNVYAIVVVPDDLTKISMNLKAPVIVNKDNRKAAQVILDTDEYTVRHYIMDELQKQEV</sequence>
<reference key="1">
    <citation type="submission" date="2009-01" db="EMBL/GenBank/DDBJ databases">
        <title>Complete sequence of Clostridium cellulolyticum H10.</title>
        <authorList>
            <consortium name="US DOE Joint Genome Institute"/>
            <person name="Lucas S."/>
            <person name="Copeland A."/>
            <person name="Lapidus A."/>
            <person name="Glavina del Rio T."/>
            <person name="Dalin E."/>
            <person name="Tice H."/>
            <person name="Bruce D."/>
            <person name="Goodwin L."/>
            <person name="Pitluck S."/>
            <person name="Chertkov O."/>
            <person name="Saunders E."/>
            <person name="Brettin T."/>
            <person name="Detter J.C."/>
            <person name="Han C."/>
            <person name="Larimer F."/>
            <person name="Land M."/>
            <person name="Hauser L."/>
            <person name="Kyrpides N."/>
            <person name="Ivanova N."/>
            <person name="Zhou J."/>
            <person name="Richardson P."/>
        </authorList>
    </citation>
    <scope>NUCLEOTIDE SEQUENCE [LARGE SCALE GENOMIC DNA]</scope>
    <source>
        <strain>ATCC 35319 / DSM 5812 / JCM 6584 / H10</strain>
    </source>
</reference>
<name>FLIW_RUMCH</name>
<protein>
    <recommendedName>
        <fullName evidence="1">Flagellar assembly factor FliW</fullName>
    </recommendedName>
</protein>
<accession>B8I4D2</accession>